<accession>Q7W1Z7</accession>
<dbReference type="EC" id="3.13.2.1" evidence="1"/>
<dbReference type="EMBL" id="BX640423">
    <property type="protein sequence ID" value="CAE39936.1"/>
    <property type="molecule type" value="Genomic_DNA"/>
</dbReference>
<dbReference type="RefSeq" id="WP_003807196.1">
    <property type="nucleotide sequence ID" value="NC_002928.3"/>
</dbReference>
<dbReference type="SMR" id="Q7W1Z7"/>
<dbReference type="GeneID" id="93206426"/>
<dbReference type="KEGG" id="bpa:BPP0195"/>
<dbReference type="HOGENOM" id="CLU_025194_2_1_4"/>
<dbReference type="UniPathway" id="UPA00314">
    <property type="reaction ID" value="UER00076"/>
</dbReference>
<dbReference type="Proteomes" id="UP000001421">
    <property type="component" value="Chromosome"/>
</dbReference>
<dbReference type="GO" id="GO:0005829">
    <property type="term" value="C:cytosol"/>
    <property type="evidence" value="ECO:0007669"/>
    <property type="project" value="TreeGrafter"/>
</dbReference>
<dbReference type="GO" id="GO:0004013">
    <property type="term" value="F:adenosylhomocysteinase activity"/>
    <property type="evidence" value="ECO:0007669"/>
    <property type="project" value="UniProtKB-UniRule"/>
</dbReference>
<dbReference type="GO" id="GO:0071269">
    <property type="term" value="P:L-homocysteine biosynthetic process"/>
    <property type="evidence" value="ECO:0007669"/>
    <property type="project" value="UniProtKB-UniRule"/>
</dbReference>
<dbReference type="GO" id="GO:0006730">
    <property type="term" value="P:one-carbon metabolic process"/>
    <property type="evidence" value="ECO:0007669"/>
    <property type="project" value="UniProtKB-KW"/>
</dbReference>
<dbReference type="GO" id="GO:0033353">
    <property type="term" value="P:S-adenosylmethionine cycle"/>
    <property type="evidence" value="ECO:0007669"/>
    <property type="project" value="TreeGrafter"/>
</dbReference>
<dbReference type="CDD" id="cd00401">
    <property type="entry name" value="SAHH"/>
    <property type="match status" value="1"/>
</dbReference>
<dbReference type="FunFam" id="3.40.50.720:FF:000004">
    <property type="entry name" value="Adenosylhomocysteinase"/>
    <property type="match status" value="1"/>
</dbReference>
<dbReference type="Gene3D" id="3.40.50.1480">
    <property type="entry name" value="Adenosylhomocysteinase-like"/>
    <property type="match status" value="1"/>
</dbReference>
<dbReference type="Gene3D" id="3.40.50.720">
    <property type="entry name" value="NAD(P)-binding Rossmann-like Domain"/>
    <property type="match status" value="1"/>
</dbReference>
<dbReference type="HAMAP" id="MF_00563">
    <property type="entry name" value="AdoHcyase"/>
    <property type="match status" value="1"/>
</dbReference>
<dbReference type="InterPro" id="IPR042172">
    <property type="entry name" value="Adenosylhomocyst_ase-like_sf"/>
</dbReference>
<dbReference type="InterPro" id="IPR000043">
    <property type="entry name" value="Adenosylhomocysteinase-like"/>
</dbReference>
<dbReference type="InterPro" id="IPR015878">
    <property type="entry name" value="Ado_hCys_hydrolase_NAD-bd"/>
</dbReference>
<dbReference type="InterPro" id="IPR036291">
    <property type="entry name" value="NAD(P)-bd_dom_sf"/>
</dbReference>
<dbReference type="InterPro" id="IPR020082">
    <property type="entry name" value="S-Ado-L-homoCys_hydrolase_CS"/>
</dbReference>
<dbReference type="NCBIfam" id="TIGR00936">
    <property type="entry name" value="ahcY"/>
    <property type="match status" value="1"/>
</dbReference>
<dbReference type="NCBIfam" id="NF004005">
    <property type="entry name" value="PRK05476.2-3"/>
    <property type="match status" value="1"/>
</dbReference>
<dbReference type="PANTHER" id="PTHR23420">
    <property type="entry name" value="ADENOSYLHOMOCYSTEINASE"/>
    <property type="match status" value="1"/>
</dbReference>
<dbReference type="PANTHER" id="PTHR23420:SF0">
    <property type="entry name" value="ADENOSYLHOMOCYSTEINASE"/>
    <property type="match status" value="1"/>
</dbReference>
<dbReference type="Pfam" id="PF05221">
    <property type="entry name" value="AdoHcyase"/>
    <property type="match status" value="1"/>
</dbReference>
<dbReference type="Pfam" id="PF00670">
    <property type="entry name" value="AdoHcyase_NAD"/>
    <property type="match status" value="1"/>
</dbReference>
<dbReference type="PIRSF" id="PIRSF001109">
    <property type="entry name" value="Ad_hcy_hydrolase"/>
    <property type="match status" value="1"/>
</dbReference>
<dbReference type="SMART" id="SM00996">
    <property type="entry name" value="AdoHcyase"/>
    <property type="match status" value="1"/>
</dbReference>
<dbReference type="SMART" id="SM00997">
    <property type="entry name" value="AdoHcyase_NAD"/>
    <property type="match status" value="1"/>
</dbReference>
<dbReference type="SUPFAM" id="SSF52283">
    <property type="entry name" value="Formate/glycerate dehydrogenase catalytic domain-like"/>
    <property type="match status" value="1"/>
</dbReference>
<dbReference type="SUPFAM" id="SSF51735">
    <property type="entry name" value="NAD(P)-binding Rossmann-fold domains"/>
    <property type="match status" value="1"/>
</dbReference>
<dbReference type="PROSITE" id="PS00738">
    <property type="entry name" value="ADOHCYASE_1"/>
    <property type="match status" value="1"/>
</dbReference>
<dbReference type="PROSITE" id="PS00739">
    <property type="entry name" value="ADOHCYASE_2"/>
    <property type="match status" value="1"/>
</dbReference>
<organism>
    <name type="scientific">Bordetella parapertussis (strain 12822 / ATCC BAA-587 / NCTC 13253)</name>
    <dbReference type="NCBI Taxonomy" id="257311"/>
    <lineage>
        <taxon>Bacteria</taxon>
        <taxon>Pseudomonadati</taxon>
        <taxon>Pseudomonadota</taxon>
        <taxon>Betaproteobacteria</taxon>
        <taxon>Burkholderiales</taxon>
        <taxon>Alcaligenaceae</taxon>
        <taxon>Bordetella</taxon>
    </lineage>
</organism>
<evidence type="ECO:0000255" key="1">
    <source>
        <dbReference type="HAMAP-Rule" id="MF_00563"/>
    </source>
</evidence>
<proteinExistence type="inferred from homology"/>
<comment type="function">
    <text evidence="1">May play a key role in the regulation of the intracellular concentration of adenosylhomocysteine.</text>
</comment>
<comment type="catalytic activity">
    <reaction evidence="1">
        <text>S-adenosyl-L-homocysteine + H2O = L-homocysteine + adenosine</text>
        <dbReference type="Rhea" id="RHEA:21708"/>
        <dbReference type="ChEBI" id="CHEBI:15377"/>
        <dbReference type="ChEBI" id="CHEBI:16335"/>
        <dbReference type="ChEBI" id="CHEBI:57856"/>
        <dbReference type="ChEBI" id="CHEBI:58199"/>
        <dbReference type="EC" id="3.13.2.1"/>
    </reaction>
</comment>
<comment type="cofactor">
    <cofactor evidence="1">
        <name>NAD(+)</name>
        <dbReference type="ChEBI" id="CHEBI:57540"/>
    </cofactor>
    <text evidence="1">Binds 1 NAD(+) per subunit.</text>
</comment>
<comment type="pathway">
    <text evidence="1">Amino-acid biosynthesis; L-homocysteine biosynthesis; L-homocysteine from S-adenosyl-L-homocysteine: step 1/1.</text>
</comment>
<comment type="subcellular location">
    <subcellularLocation>
        <location evidence="1">Cytoplasm</location>
    </subcellularLocation>
</comment>
<comment type="similarity">
    <text evidence="1">Belongs to the adenosylhomocysteinase family.</text>
</comment>
<protein>
    <recommendedName>
        <fullName evidence="1">Adenosylhomocysteinase</fullName>
        <ecNumber evidence="1">3.13.2.1</ecNumber>
    </recommendedName>
    <alternativeName>
        <fullName evidence="1">S-adenosyl-L-homocysteine hydrolase</fullName>
        <shortName evidence="1">AdoHcyase</shortName>
    </alternativeName>
</protein>
<gene>
    <name evidence="1" type="primary">ahcY</name>
    <name type="synonym">acyH</name>
    <name type="ordered locus">BPP0195</name>
</gene>
<reference key="1">
    <citation type="journal article" date="2003" name="Nat. Genet.">
        <title>Comparative analysis of the genome sequences of Bordetella pertussis, Bordetella parapertussis and Bordetella bronchiseptica.</title>
        <authorList>
            <person name="Parkhill J."/>
            <person name="Sebaihia M."/>
            <person name="Preston A."/>
            <person name="Murphy L.D."/>
            <person name="Thomson N.R."/>
            <person name="Harris D.E."/>
            <person name="Holden M.T.G."/>
            <person name="Churcher C.M."/>
            <person name="Bentley S.D."/>
            <person name="Mungall K.L."/>
            <person name="Cerdeno-Tarraga A.-M."/>
            <person name="Temple L."/>
            <person name="James K.D."/>
            <person name="Harris B."/>
            <person name="Quail M.A."/>
            <person name="Achtman M."/>
            <person name="Atkin R."/>
            <person name="Baker S."/>
            <person name="Basham D."/>
            <person name="Bason N."/>
            <person name="Cherevach I."/>
            <person name="Chillingworth T."/>
            <person name="Collins M."/>
            <person name="Cronin A."/>
            <person name="Davis P."/>
            <person name="Doggett J."/>
            <person name="Feltwell T."/>
            <person name="Goble A."/>
            <person name="Hamlin N."/>
            <person name="Hauser H."/>
            <person name="Holroyd S."/>
            <person name="Jagels K."/>
            <person name="Leather S."/>
            <person name="Moule S."/>
            <person name="Norberczak H."/>
            <person name="O'Neil S."/>
            <person name="Ormond D."/>
            <person name="Price C."/>
            <person name="Rabbinowitsch E."/>
            <person name="Rutter S."/>
            <person name="Sanders M."/>
            <person name="Saunders D."/>
            <person name="Seeger K."/>
            <person name="Sharp S."/>
            <person name="Simmonds M."/>
            <person name="Skelton J."/>
            <person name="Squares R."/>
            <person name="Squares S."/>
            <person name="Stevens K."/>
            <person name="Unwin L."/>
            <person name="Whitehead S."/>
            <person name="Barrell B.G."/>
            <person name="Maskell D.J."/>
        </authorList>
    </citation>
    <scope>NUCLEOTIDE SEQUENCE [LARGE SCALE GENOMIC DNA]</scope>
    <source>
        <strain>12822 / ATCC BAA-587 / NCTC 13253</strain>
    </source>
</reference>
<sequence>MNAVTDKSVADYIVADMALAGWGRRELAIAETEMPGLMAIRDEYAASQPLKGARIAGSLHMTIQTGVLIETLVALGAEVRWASCNIFSTQDHAAAAIAATGTPVFAIKGETLEEYWQYTHKIFEWPEGRHANMILDDGGDATLLLHLGARAEQDISVLAKPGSEEERVLFAAIKETLARDPKWYSTRLAQIKGVTEETTTGVHRLYQMSQKGELAFAAINVNDSVTKSKFDNLYGCRESLVDGIKRATDVMVAGKIAVVAGYGDVGKGCAQALAALRAQVWVTEIDPICALQAAMEGFKVVTMEEAAAHADIFVTATGNYHVITRQHMEAMKDQAIVCNIGHFDNEIDVAGLENCQWEEIKPQVDHVIFPDGKRIILLAKGRLVNLGCATGHPSFVMSSSFANQTIAQIELFTRNEAYTTGQVYVLPKHLDEKVARLHLKKLGAKLSTLSKQQADYIGVPVEGPFKPGHYRY</sequence>
<keyword id="KW-0963">Cytoplasm</keyword>
<keyword id="KW-0378">Hydrolase</keyword>
<keyword id="KW-0520">NAD</keyword>
<keyword id="KW-0554">One-carbon metabolism</keyword>
<name>SAHH_BORPA</name>
<feature type="chain" id="PRO_0000116948" description="Adenosylhomocysteinase">
    <location>
        <begin position="1"/>
        <end position="472"/>
    </location>
</feature>
<feature type="binding site" evidence="1">
    <location>
        <position position="62"/>
    </location>
    <ligand>
        <name>substrate</name>
    </ligand>
</feature>
<feature type="binding site" evidence="1">
    <location>
        <position position="137"/>
    </location>
    <ligand>
        <name>substrate</name>
    </ligand>
</feature>
<feature type="binding site" evidence="1">
    <location>
        <position position="197"/>
    </location>
    <ligand>
        <name>substrate</name>
    </ligand>
</feature>
<feature type="binding site" evidence="1">
    <location>
        <begin position="198"/>
        <end position="200"/>
    </location>
    <ligand>
        <name>NAD(+)</name>
        <dbReference type="ChEBI" id="CHEBI:57540"/>
    </ligand>
</feature>
<feature type="binding site" evidence="1">
    <location>
        <position position="227"/>
    </location>
    <ligand>
        <name>substrate</name>
    </ligand>
</feature>
<feature type="binding site" evidence="1">
    <location>
        <position position="231"/>
    </location>
    <ligand>
        <name>substrate</name>
    </ligand>
</feature>
<feature type="binding site" evidence="1">
    <location>
        <position position="232"/>
    </location>
    <ligand>
        <name>NAD(+)</name>
        <dbReference type="ChEBI" id="CHEBI:57540"/>
    </ligand>
</feature>
<feature type="binding site" evidence="1">
    <location>
        <begin position="261"/>
        <end position="266"/>
    </location>
    <ligand>
        <name>NAD(+)</name>
        <dbReference type="ChEBI" id="CHEBI:57540"/>
    </ligand>
</feature>
<feature type="binding site" evidence="1">
    <location>
        <position position="284"/>
    </location>
    <ligand>
        <name>NAD(+)</name>
        <dbReference type="ChEBI" id="CHEBI:57540"/>
    </ligand>
</feature>
<feature type="binding site" evidence="1">
    <location>
        <position position="319"/>
    </location>
    <ligand>
        <name>NAD(+)</name>
        <dbReference type="ChEBI" id="CHEBI:57540"/>
    </ligand>
</feature>
<feature type="binding site" evidence="1">
    <location>
        <begin position="340"/>
        <end position="342"/>
    </location>
    <ligand>
        <name>NAD(+)</name>
        <dbReference type="ChEBI" id="CHEBI:57540"/>
    </ligand>
</feature>
<feature type="binding site" evidence="1">
    <location>
        <position position="385"/>
    </location>
    <ligand>
        <name>NAD(+)</name>
        <dbReference type="ChEBI" id="CHEBI:57540"/>
    </ligand>
</feature>